<gene>
    <name evidence="1" type="primary">rpsN</name>
    <name type="ordered locus">Cpar_0190</name>
</gene>
<feature type="chain" id="PRO_1000128354" description="Small ribosomal subunit protein uS14">
    <location>
        <begin position="1"/>
        <end position="89"/>
    </location>
</feature>
<dbReference type="EMBL" id="CP001099">
    <property type="protein sequence ID" value="ACF10617.1"/>
    <property type="molecule type" value="Genomic_DNA"/>
</dbReference>
<dbReference type="RefSeq" id="WP_012501452.1">
    <property type="nucleotide sequence ID" value="NC_011027.1"/>
</dbReference>
<dbReference type="SMR" id="B3QR76"/>
<dbReference type="STRING" id="517417.Cpar_0190"/>
<dbReference type="KEGG" id="cpc:Cpar_0190"/>
<dbReference type="eggNOG" id="COG0199">
    <property type="taxonomic scope" value="Bacteria"/>
</dbReference>
<dbReference type="HOGENOM" id="CLU_139869_0_0_10"/>
<dbReference type="OrthoDB" id="9810484at2"/>
<dbReference type="Proteomes" id="UP000008811">
    <property type="component" value="Chromosome"/>
</dbReference>
<dbReference type="GO" id="GO:0005737">
    <property type="term" value="C:cytoplasm"/>
    <property type="evidence" value="ECO:0007669"/>
    <property type="project" value="UniProtKB-ARBA"/>
</dbReference>
<dbReference type="GO" id="GO:0015935">
    <property type="term" value="C:small ribosomal subunit"/>
    <property type="evidence" value="ECO:0007669"/>
    <property type="project" value="TreeGrafter"/>
</dbReference>
<dbReference type="GO" id="GO:0019843">
    <property type="term" value="F:rRNA binding"/>
    <property type="evidence" value="ECO:0007669"/>
    <property type="project" value="UniProtKB-UniRule"/>
</dbReference>
<dbReference type="GO" id="GO:0003735">
    <property type="term" value="F:structural constituent of ribosome"/>
    <property type="evidence" value="ECO:0007669"/>
    <property type="project" value="InterPro"/>
</dbReference>
<dbReference type="GO" id="GO:0006412">
    <property type="term" value="P:translation"/>
    <property type="evidence" value="ECO:0007669"/>
    <property type="project" value="UniProtKB-UniRule"/>
</dbReference>
<dbReference type="Gene3D" id="4.10.830.10">
    <property type="entry name" value="30s Ribosomal Protein S14, Chain N"/>
    <property type="match status" value="1"/>
</dbReference>
<dbReference type="HAMAP" id="MF_00537">
    <property type="entry name" value="Ribosomal_uS14_1"/>
    <property type="match status" value="1"/>
</dbReference>
<dbReference type="InterPro" id="IPR001209">
    <property type="entry name" value="Ribosomal_uS14"/>
</dbReference>
<dbReference type="InterPro" id="IPR023036">
    <property type="entry name" value="Ribosomal_uS14_bac/plastid"/>
</dbReference>
<dbReference type="InterPro" id="IPR018271">
    <property type="entry name" value="Ribosomal_uS14_CS"/>
</dbReference>
<dbReference type="InterPro" id="IPR043140">
    <property type="entry name" value="Ribosomal_uS14_sf"/>
</dbReference>
<dbReference type="NCBIfam" id="NF006477">
    <property type="entry name" value="PRK08881.1"/>
    <property type="match status" value="1"/>
</dbReference>
<dbReference type="PANTHER" id="PTHR19836">
    <property type="entry name" value="30S RIBOSOMAL PROTEIN S14"/>
    <property type="match status" value="1"/>
</dbReference>
<dbReference type="PANTHER" id="PTHR19836:SF19">
    <property type="entry name" value="SMALL RIBOSOMAL SUBUNIT PROTEIN US14M"/>
    <property type="match status" value="1"/>
</dbReference>
<dbReference type="Pfam" id="PF00253">
    <property type="entry name" value="Ribosomal_S14"/>
    <property type="match status" value="1"/>
</dbReference>
<dbReference type="SUPFAM" id="SSF57716">
    <property type="entry name" value="Glucocorticoid receptor-like (DNA-binding domain)"/>
    <property type="match status" value="1"/>
</dbReference>
<dbReference type="PROSITE" id="PS00527">
    <property type="entry name" value="RIBOSOMAL_S14"/>
    <property type="match status" value="1"/>
</dbReference>
<reference key="1">
    <citation type="submission" date="2008-06" db="EMBL/GenBank/DDBJ databases">
        <title>Complete sequence of Chlorobaculum parvum NCIB 8327.</title>
        <authorList>
            <consortium name="US DOE Joint Genome Institute"/>
            <person name="Lucas S."/>
            <person name="Copeland A."/>
            <person name="Lapidus A."/>
            <person name="Glavina del Rio T."/>
            <person name="Dalin E."/>
            <person name="Tice H."/>
            <person name="Bruce D."/>
            <person name="Goodwin L."/>
            <person name="Pitluck S."/>
            <person name="Schmutz J."/>
            <person name="Larimer F."/>
            <person name="Land M."/>
            <person name="Hauser L."/>
            <person name="Kyrpides N."/>
            <person name="Mikhailova N."/>
            <person name="Zhao F."/>
            <person name="Li T."/>
            <person name="Liu Z."/>
            <person name="Overmann J."/>
            <person name="Bryant D.A."/>
            <person name="Richardson P."/>
        </authorList>
    </citation>
    <scope>NUCLEOTIDE SEQUENCE [LARGE SCALE GENOMIC DNA]</scope>
    <source>
        <strain>DSM 263 / NCIMB 8327</strain>
    </source>
</reference>
<organism>
    <name type="scientific">Chlorobaculum parvum (strain DSM 263 / NCIMB 8327)</name>
    <name type="common">Chlorobium vibrioforme subsp. thiosulfatophilum</name>
    <dbReference type="NCBI Taxonomy" id="517417"/>
    <lineage>
        <taxon>Bacteria</taxon>
        <taxon>Pseudomonadati</taxon>
        <taxon>Chlorobiota</taxon>
        <taxon>Chlorobiia</taxon>
        <taxon>Chlorobiales</taxon>
        <taxon>Chlorobiaceae</taxon>
        <taxon>Chlorobaculum</taxon>
    </lineage>
</organism>
<name>RS14_CHLP8</name>
<keyword id="KW-0687">Ribonucleoprotein</keyword>
<keyword id="KW-0689">Ribosomal protein</keyword>
<keyword id="KW-0694">RNA-binding</keyword>
<keyword id="KW-0699">rRNA-binding</keyword>
<accession>B3QR76</accession>
<evidence type="ECO:0000255" key="1">
    <source>
        <dbReference type="HAMAP-Rule" id="MF_00537"/>
    </source>
</evidence>
<evidence type="ECO:0000305" key="2"/>
<proteinExistence type="inferred from homology"/>
<protein>
    <recommendedName>
        <fullName evidence="1">Small ribosomal subunit protein uS14</fullName>
    </recommendedName>
    <alternativeName>
        <fullName evidence="2">30S ribosomal protein S14</fullName>
    </alternativeName>
</protein>
<comment type="function">
    <text evidence="1">Binds 16S rRNA, required for the assembly of 30S particles and may also be responsible for determining the conformation of the 16S rRNA at the A site.</text>
</comment>
<comment type="subunit">
    <text evidence="1">Part of the 30S ribosomal subunit. Contacts proteins S3 and S10.</text>
</comment>
<comment type="similarity">
    <text evidence="1">Belongs to the universal ribosomal protein uS14 family.</text>
</comment>
<sequence length="89" mass="10354">MARKSIIARNERRKELVEKYAAKREELKKAGDYEALRKLPRDSSATRVRNRCVLTGRGRGNYEKFGLCRNMFRKLALEGKLPGVRKASW</sequence>